<keyword id="KW-0024">Alternative initiation</keyword>
<keyword id="KW-0025">Alternative splicing</keyword>
<keyword id="KW-0167">Capsid protein</keyword>
<keyword id="KW-1166">Caveolin-mediated endocytosis of virus by host</keyword>
<keyword id="KW-1015">Disulfide bond</keyword>
<keyword id="KW-1048">Host nucleus</keyword>
<keyword id="KW-0945">Host-virus interaction</keyword>
<keyword id="KW-0426">Late protein</keyword>
<keyword id="KW-0597">Phosphoprotein</keyword>
<keyword id="KW-1145">T=7 icosahedral capsid protein</keyword>
<keyword id="KW-1161">Viral attachment to host cell</keyword>
<keyword id="KW-1162">Viral penetration into host cytoplasm</keyword>
<keyword id="KW-0946">Virion</keyword>
<keyword id="KW-1164">Virus endocytosis by host</keyword>
<keyword id="KW-1160">Virus entry into host cell</keyword>
<protein>
    <recommendedName>
        <fullName>Major capsid protein VP1</fullName>
    </recommendedName>
    <alternativeName>
        <fullName>Major structural protein VP1</fullName>
    </alternativeName>
</protein>
<reference key="1">
    <citation type="journal article" date="1991" name="Virology">
        <title>Nucleotide sequence and genome organization of the murine polyomavirus, Kilham strain.</title>
        <authorList>
            <person name="Mayer M."/>
            <person name="Doerries K."/>
        </authorList>
    </citation>
    <scope>NUCLEOTIDE SEQUENCE [GENOMIC DNA]</scope>
</reference>
<reference key="2">
    <citation type="journal article" date="2009" name="Virology">
        <title>The Polyomaviridae: Contributions of virus structure to our understanding of virus receptors and infectious entry.</title>
        <authorList>
            <person name="Neu U."/>
            <person name="Stehle T."/>
            <person name="Atwood W.J."/>
        </authorList>
    </citation>
    <scope>REVIEW</scope>
</reference>
<feature type="initiator methionine" description="Removed; by host" evidence="1">
    <location>
        <position position="1"/>
    </location>
</feature>
<feature type="chain" id="PRO_0000115027" description="Major capsid protein VP1">
    <location>
        <begin position="2"/>
        <end position="373"/>
    </location>
</feature>
<feature type="region of interest" description="Disordered" evidence="3">
    <location>
        <begin position="1"/>
        <end position="21"/>
    </location>
</feature>
<feature type="region of interest" description="C-terminal arm" evidence="2">
    <location>
        <begin position="299"/>
        <end position="373"/>
    </location>
</feature>
<feature type="compositionally biased region" description="Polar residues" evidence="3">
    <location>
        <begin position="10"/>
        <end position="21"/>
    </location>
</feature>
<feature type="disulfide bond" description="Interchain (with C-102)" evidence="1">
    <location>
        <position position="102"/>
    </location>
</feature>
<comment type="function">
    <text evidence="2 5">Forms an icosahedral capsid with a T=7 symmetry and a 40 nm diameter. The capsid is composed of 72 pentamers linked to each other by disulfide bonds and associated with VP2 or VP3 proteins. Interacts with terminal alpha(2,3)-linked sialic acids on the cell surface to provide virion attachment to target cell. This attachment induces virion internalization predominantly through caveolin-mediated endocytosis. Once attached, the virion is internalized by caveolin-mediated endocytosis and traffics to the endoplasmic reticulum. Inside the endoplasmic reticulum, the protein folding machinery isomerizes VP1 interpentamer disulfide bonds, thereby triggering initial uncoating. Next, the virion uses the endoplasmic reticulum-associated degradation machinery to probably translocate in the cytosol before reaching the nucleus. Nuclear entry of the viral DNA involves the selective exposure and importin recognition of VP2/Vp3 nuclear localization signal. In late phase of infection, neo-synthesized VP1 encapsulates replicated genomic DNA in the nucleus, and participates in rearranging nucleosomes around the viral DNA.</text>
</comment>
<comment type="subunit">
    <text evidence="2">Homomultimer; disulfide-linked. The virus capsid is composed of 72 icosahedral units, each one composed of five disulfide-linked copies of VP1. Interacts with minor capsid proteins VP2 and VP3.</text>
</comment>
<comment type="subcellular location">
    <subcellularLocation>
        <location>Virion</location>
    </subcellularLocation>
    <subcellularLocation>
        <location evidence="2">Host nucleus</location>
    </subcellularLocation>
</comment>
<comment type="alternative products">
    <event type="alternative splicing"/>
    <event type="alternative initiation"/>
    <isoform>
        <id>P24595-1</id>
        <name>VP1</name>
        <sequence type="displayed"/>
    </isoform>
    <isoform>
        <id>P24596-1</id>
        <name>VP2</name>
        <name>Minor capsid protein VP2</name>
        <sequence type="external"/>
    </isoform>
    <isoform>
        <id>P24596-2</id>
        <name>VP3</name>
        <name>Minor capsid protein VP3</name>
        <sequence type="external"/>
    </isoform>
</comment>
<comment type="domain">
    <text evidence="2">The intrinsically disordered C-terminal arm interacts with neighboring pentamers. The unstructured nature of this region allows to make different interactions depending on the structural context: pentamers present at the 12 icosahedral fivefold axes bind five pentamers, whereas pentamers present at the 60 icosahedral six-fold axes interact with six pentamers.</text>
</comment>
<comment type="miscellaneous">
    <text>The virus attaches to the surface of cells by recognition of oligosaccharides terminating in alpha(2,3)-linked sialic acid. Strains that have Gly-92 (small-plaque strains) can also recognize branched oligosaccharides that carry a second alpha(2,6)-linked sialic acid.</text>
</comment>
<comment type="miscellaneous">
    <molecule>Isoform VP1</molecule>
    <text>Produced by alternative splicing of the late mRNA.</text>
</comment>
<comment type="similarity">
    <text evidence="4">Belongs to the polyomaviruses coat protein VP1 family.</text>
</comment>
<organism>
    <name type="scientific">Murine polyomavirus (strain Kilham)</name>
    <name type="common">MPyV</name>
    <name type="synonym">Murine pneumotropic virus</name>
    <dbReference type="NCBI Taxonomy" id="10638"/>
    <lineage>
        <taxon>Viruses</taxon>
        <taxon>Monodnaviria</taxon>
        <taxon>Shotokuvirae</taxon>
        <taxon>Cossaviricota</taxon>
        <taxon>Papovaviricetes</taxon>
        <taxon>Sepolyvirales</taxon>
        <taxon>Polyomaviridae</taxon>
        <taxon>Betapolyomavirus</taxon>
        <taxon>Betapolyomavirus secumuris</taxon>
    </lineage>
</organism>
<accession>P24595</accession>
<sequence>MAPTVKKRTSQNQGLSPQKSQNSVVVGGIQVLDVRTGPDSITQIEAFLNPRMGKPVDSDFYGFSDNITVSADYTQDMPRIKELPCYSMAKISLPMLNEDMTCDTILMWEAISCKTEVVGVSSLTNCHSAVKRLYDNEGAGFPVQGLNFHFFSVGGEALDLQWLWKNYRCNYPAGVAALQAAPKAAQVLDPKLKAKLTADGKFPIEAWSPDPAKNENTRYFGTYTGGLQTPPVLQITNTTTTILLNENGVGPLCKGDGLYLASADIVGFRTQQNNKMHLRGLPRYFSIHLRKGCANPYPVSSLLNTFSSEMMPLNSWMLQVEEVRIYDGVERLPGDPDMIRYRIIWPGRLLSLIFPAMRHKHLYFFVMQAFIVL</sequence>
<organismHost>
    <name type="scientific">Mus musculus</name>
    <name type="common">Mouse</name>
    <dbReference type="NCBI Taxonomy" id="10090"/>
</organismHost>
<name>VP1_POVMK</name>
<dbReference type="EMBL" id="M55904">
    <property type="protein sequence ID" value="AAA46553.1"/>
    <property type="molecule type" value="Genomic_DNA"/>
</dbReference>
<dbReference type="PIR" id="C37945">
    <property type="entry name" value="VVVPK1"/>
</dbReference>
<dbReference type="RefSeq" id="NP_041234.1">
    <property type="nucleotide sequence ID" value="NC_001505.2"/>
</dbReference>
<dbReference type="SMR" id="P24595"/>
<dbReference type="GeneID" id="29031028"/>
<dbReference type="KEGG" id="vg:29031028"/>
<dbReference type="Proteomes" id="UP000106006">
    <property type="component" value="Segment"/>
</dbReference>
<dbReference type="GO" id="GO:0042025">
    <property type="term" value="C:host cell nucleus"/>
    <property type="evidence" value="ECO:0007669"/>
    <property type="project" value="UniProtKB-SubCell"/>
</dbReference>
<dbReference type="GO" id="GO:0039620">
    <property type="term" value="C:T=7 icosahedral viral capsid"/>
    <property type="evidence" value="ECO:0007669"/>
    <property type="project" value="UniProtKB-KW"/>
</dbReference>
<dbReference type="GO" id="GO:0005198">
    <property type="term" value="F:structural molecule activity"/>
    <property type="evidence" value="ECO:0007669"/>
    <property type="project" value="InterPro"/>
</dbReference>
<dbReference type="GO" id="GO:0075513">
    <property type="term" value="P:caveolin-mediated endocytosis of virus by host cell"/>
    <property type="evidence" value="ECO:0007669"/>
    <property type="project" value="UniProtKB-KW"/>
</dbReference>
<dbReference type="GO" id="GO:0019062">
    <property type="term" value="P:virion attachment to host cell"/>
    <property type="evidence" value="ECO:0007669"/>
    <property type="project" value="UniProtKB-KW"/>
</dbReference>
<dbReference type="Gene3D" id="2.60.175.10">
    <property type="entry name" value="Capsid protein VP1,Polyomavirus"/>
    <property type="match status" value="1"/>
</dbReference>
<dbReference type="InterPro" id="IPR000662">
    <property type="entry name" value="Capsid_VP1_Polyomavir"/>
</dbReference>
<dbReference type="InterPro" id="IPR011222">
    <property type="entry name" value="dsDNA_vir_gr_I_capsid"/>
</dbReference>
<dbReference type="InterPro" id="IPR036931">
    <property type="entry name" value="Polyomavir_VP1_sf"/>
</dbReference>
<dbReference type="Pfam" id="PF00718">
    <property type="entry name" value="Polyoma_coat"/>
    <property type="match status" value="1"/>
</dbReference>
<dbReference type="PIRSF" id="PIRSF003376">
    <property type="entry name" value="Capsid_VP1_Polyomavir"/>
    <property type="match status" value="1"/>
</dbReference>
<dbReference type="SUPFAM" id="SSF88648">
    <property type="entry name" value="Group I dsDNA viruses"/>
    <property type="match status" value="1"/>
</dbReference>
<evidence type="ECO:0000250" key="1"/>
<evidence type="ECO:0000250" key="2">
    <source>
        <dbReference type="UniProtKB" id="P03087"/>
    </source>
</evidence>
<evidence type="ECO:0000256" key="3">
    <source>
        <dbReference type="SAM" id="MobiDB-lite"/>
    </source>
</evidence>
<evidence type="ECO:0000305" key="4"/>
<evidence type="ECO:0000305" key="5">
    <source>
    </source>
</evidence>
<proteinExistence type="inferred from homology"/>